<evidence type="ECO:0000255" key="1">
    <source>
        <dbReference type="HAMAP-Rule" id="MF_00358"/>
    </source>
</evidence>
<evidence type="ECO:0000256" key="2">
    <source>
        <dbReference type="SAM" id="MobiDB-lite"/>
    </source>
</evidence>
<evidence type="ECO:0000305" key="3"/>
<organism>
    <name type="scientific">Halorhodospira halophila (strain DSM 244 / SL1)</name>
    <name type="common">Ectothiorhodospira halophila (strain DSM 244 / SL1)</name>
    <dbReference type="NCBI Taxonomy" id="349124"/>
    <lineage>
        <taxon>Bacteria</taxon>
        <taxon>Pseudomonadati</taxon>
        <taxon>Pseudomonadota</taxon>
        <taxon>Gammaproteobacteria</taxon>
        <taxon>Chromatiales</taxon>
        <taxon>Ectothiorhodospiraceae</taxon>
        <taxon>Halorhodospira</taxon>
    </lineage>
</organism>
<reference key="1">
    <citation type="submission" date="2006-12" db="EMBL/GenBank/DDBJ databases">
        <title>Complete sequence of Halorhodospira halophila SL1.</title>
        <authorList>
            <consortium name="US DOE Joint Genome Institute"/>
            <person name="Copeland A."/>
            <person name="Lucas S."/>
            <person name="Lapidus A."/>
            <person name="Barry K."/>
            <person name="Detter J.C."/>
            <person name="Glavina del Rio T."/>
            <person name="Hammon N."/>
            <person name="Israni S."/>
            <person name="Dalin E."/>
            <person name="Tice H."/>
            <person name="Pitluck S."/>
            <person name="Saunders E."/>
            <person name="Brettin T."/>
            <person name="Bruce D."/>
            <person name="Han C."/>
            <person name="Tapia R."/>
            <person name="Schmutz J."/>
            <person name="Larimer F."/>
            <person name="Land M."/>
            <person name="Hauser L."/>
            <person name="Kyrpides N."/>
            <person name="Mikhailova N."/>
            <person name="Hoff W."/>
            <person name="Richardson P."/>
        </authorList>
    </citation>
    <scope>NUCLEOTIDE SEQUENCE [LARGE SCALE GENOMIC DNA]</scope>
    <source>
        <strain>DSM 244 / SL1</strain>
    </source>
</reference>
<comment type="similarity">
    <text evidence="1">Belongs to the bacterial ribosomal protein bS21 family.</text>
</comment>
<sequence>MPIVKVRENEPFEVALRRFKRSCEKAGVLSEIRRREYYEKPTQVRKRKQAAAVKRHMKRLNREQQRRQRPY</sequence>
<protein>
    <recommendedName>
        <fullName evidence="1">Small ribosomal subunit protein bS21</fullName>
    </recommendedName>
    <alternativeName>
        <fullName evidence="3">30S ribosomal protein S21</fullName>
    </alternativeName>
</protein>
<name>RS21_HALHL</name>
<dbReference type="EMBL" id="CP000544">
    <property type="protein sequence ID" value="ABM61874.1"/>
    <property type="molecule type" value="Genomic_DNA"/>
</dbReference>
<dbReference type="RefSeq" id="WP_011813897.1">
    <property type="nucleotide sequence ID" value="NC_008789.1"/>
</dbReference>
<dbReference type="SMR" id="A1WW12"/>
<dbReference type="STRING" id="349124.Hhal_1098"/>
<dbReference type="KEGG" id="hha:Hhal_1098"/>
<dbReference type="eggNOG" id="COG0828">
    <property type="taxonomic scope" value="Bacteria"/>
</dbReference>
<dbReference type="HOGENOM" id="CLU_159258_1_0_6"/>
<dbReference type="OrthoDB" id="9799244at2"/>
<dbReference type="Proteomes" id="UP000000647">
    <property type="component" value="Chromosome"/>
</dbReference>
<dbReference type="GO" id="GO:1990904">
    <property type="term" value="C:ribonucleoprotein complex"/>
    <property type="evidence" value="ECO:0007669"/>
    <property type="project" value="UniProtKB-KW"/>
</dbReference>
<dbReference type="GO" id="GO:0005840">
    <property type="term" value="C:ribosome"/>
    <property type="evidence" value="ECO:0007669"/>
    <property type="project" value="UniProtKB-KW"/>
</dbReference>
<dbReference type="GO" id="GO:0003735">
    <property type="term" value="F:structural constituent of ribosome"/>
    <property type="evidence" value="ECO:0007669"/>
    <property type="project" value="InterPro"/>
</dbReference>
<dbReference type="GO" id="GO:0006412">
    <property type="term" value="P:translation"/>
    <property type="evidence" value="ECO:0007669"/>
    <property type="project" value="UniProtKB-UniRule"/>
</dbReference>
<dbReference type="Gene3D" id="1.20.5.1150">
    <property type="entry name" value="Ribosomal protein S8"/>
    <property type="match status" value="1"/>
</dbReference>
<dbReference type="HAMAP" id="MF_00358">
    <property type="entry name" value="Ribosomal_bS21"/>
    <property type="match status" value="1"/>
</dbReference>
<dbReference type="InterPro" id="IPR001911">
    <property type="entry name" value="Ribosomal_bS21"/>
</dbReference>
<dbReference type="InterPro" id="IPR018278">
    <property type="entry name" value="Ribosomal_bS21_CS"/>
</dbReference>
<dbReference type="InterPro" id="IPR038380">
    <property type="entry name" value="Ribosomal_bS21_sf"/>
</dbReference>
<dbReference type="NCBIfam" id="TIGR00030">
    <property type="entry name" value="S21p"/>
    <property type="match status" value="1"/>
</dbReference>
<dbReference type="PANTHER" id="PTHR21109">
    <property type="entry name" value="MITOCHONDRIAL 28S RIBOSOMAL PROTEIN S21"/>
    <property type="match status" value="1"/>
</dbReference>
<dbReference type="PANTHER" id="PTHR21109:SF22">
    <property type="entry name" value="SMALL RIBOSOMAL SUBUNIT PROTEIN BS21"/>
    <property type="match status" value="1"/>
</dbReference>
<dbReference type="Pfam" id="PF01165">
    <property type="entry name" value="Ribosomal_S21"/>
    <property type="match status" value="1"/>
</dbReference>
<dbReference type="PRINTS" id="PR00976">
    <property type="entry name" value="RIBOSOMALS21"/>
</dbReference>
<dbReference type="PROSITE" id="PS01181">
    <property type="entry name" value="RIBOSOMAL_S21"/>
    <property type="match status" value="1"/>
</dbReference>
<keyword id="KW-1185">Reference proteome</keyword>
<keyword id="KW-0687">Ribonucleoprotein</keyword>
<keyword id="KW-0689">Ribosomal protein</keyword>
<feature type="chain" id="PRO_1000005120" description="Small ribosomal subunit protein bS21">
    <location>
        <begin position="1"/>
        <end position="71"/>
    </location>
</feature>
<feature type="region of interest" description="Disordered" evidence="2">
    <location>
        <begin position="40"/>
        <end position="71"/>
    </location>
</feature>
<feature type="compositionally biased region" description="Basic residues" evidence="2">
    <location>
        <begin position="43"/>
        <end position="59"/>
    </location>
</feature>
<feature type="compositionally biased region" description="Basic and acidic residues" evidence="2">
    <location>
        <begin position="60"/>
        <end position="71"/>
    </location>
</feature>
<accession>A1WW12</accession>
<proteinExistence type="inferred from homology"/>
<gene>
    <name evidence="1" type="primary">rpsU</name>
    <name type="ordered locus">Hhal_1098</name>
</gene>